<feature type="chain" id="PRO_0000074625" description="Acetyltransferase YpeA">
    <location>
        <begin position="1"/>
        <end position="141"/>
    </location>
</feature>
<feature type="domain" description="N-acetyltransferase" evidence="1">
    <location>
        <begin position="1"/>
        <end position="141"/>
    </location>
</feature>
<feature type="strand" evidence="2">
    <location>
        <begin position="1"/>
        <end position="5"/>
    </location>
</feature>
<feature type="helix" evidence="2">
    <location>
        <begin position="8"/>
        <end position="10"/>
    </location>
</feature>
<feature type="helix" evidence="2">
    <location>
        <begin position="11"/>
        <end position="20"/>
    </location>
</feature>
<feature type="helix" evidence="2">
    <location>
        <begin position="30"/>
        <end position="40"/>
    </location>
</feature>
<feature type="strand" evidence="2">
    <location>
        <begin position="45"/>
        <end position="50"/>
    </location>
</feature>
<feature type="strand" evidence="2">
    <location>
        <begin position="53"/>
        <end position="62"/>
    </location>
</feature>
<feature type="strand" evidence="2">
    <location>
        <begin position="67"/>
        <end position="74"/>
    </location>
</feature>
<feature type="helix" evidence="2">
    <location>
        <begin position="76"/>
        <end position="78"/>
    </location>
</feature>
<feature type="helix" evidence="2">
    <location>
        <begin position="83"/>
        <end position="97"/>
    </location>
</feature>
<feature type="strand" evidence="2">
    <location>
        <begin position="102"/>
        <end position="110"/>
    </location>
</feature>
<feature type="helix" evidence="2">
    <location>
        <begin position="112"/>
        <end position="120"/>
    </location>
</feature>
<feature type="strand" evidence="2">
    <location>
        <begin position="127"/>
        <end position="136"/>
    </location>
</feature>
<organism>
    <name type="scientific">Shigella flexneri</name>
    <dbReference type="NCBI Taxonomy" id="623"/>
    <lineage>
        <taxon>Bacteria</taxon>
        <taxon>Pseudomonadati</taxon>
        <taxon>Pseudomonadota</taxon>
        <taxon>Gammaproteobacteria</taxon>
        <taxon>Enterobacterales</taxon>
        <taxon>Enterobacteriaceae</taxon>
        <taxon>Shigella</taxon>
    </lineage>
</organism>
<comment type="similarity">
    <text evidence="1">Belongs to the acetyltransferase family. YpeA subfamily.</text>
</comment>
<protein>
    <recommendedName>
        <fullName evidence="1">Acetyltransferase YpeA</fullName>
        <ecNumber evidence="1">2.3.1.-</ecNumber>
    </recommendedName>
</protein>
<sequence length="141" mass="16326">MEIRVFRQEDFEEVITLWERCDLLRPWNDPEMDIERKMNHDVSLFLVAEVNGEVVGTVMGGYDGHRGSAYYLGVHPEFRGRGIANALLNRLEKKLIARGCPKIQINVPEDNDMVLGMYERLGYEHADVLSLGKRLIEDEEY</sequence>
<reference key="1">
    <citation type="journal article" date="2002" name="Nucleic Acids Res.">
        <title>Genome sequence of Shigella flexneri 2a: insights into pathogenicity through comparison with genomes of Escherichia coli K12 and O157.</title>
        <authorList>
            <person name="Jin Q."/>
            <person name="Yuan Z."/>
            <person name="Xu J."/>
            <person name="Wang Y."/>
            <person name="Shen Y."/>
            <person name="Lu W."/>
            <person name="Wang J."/>
            <person name="Liu H."/>
            <person name="Yang J."/>
            <person name="Yang F."/>
            <person name="Zhang X."/>
            <person name="Zhang J."/>
            <person name="Yang G."/>
            <person name="Wu H."/>
            <person name="Qu D."/>
            <person name="Dong J."/>
            <person name="Sun L."/>
            <person name="Xue Y."/>
            <person name="Zhao A."/>
            <person name="Gao Y."/>
            <person name="Zhu J."/>
            <person name="Kan B."/>
            <person name="Ding K."/>
            <person name="Chen S."/>
            <person name="Cheng H."/>
            <person name="Yao Z."/>
            <person name="He B."/>
            <person name="Chen R."/>
            <person name="Ma D."/>
            <person name="Qiang B."/>
            <person name="Wen Y."/>
            <person name="Hou Y."/>
            <person name="Yu J."/>
        </authorList>
    </citation>
    <scope>NUCLEOTIDE SEQUENCE [LARGE SCALE GENOMIC DNA]</scope>
    <source>
        <strain>301 / Serotype 2a</strain>
    </source>
</reference>
<reference key="2">
    <citation type="journal article" date="2003" name="Infect. Immun.">
        <title>Complete genome sequence and comparative genomics of Shigella flexneri serotype 2a strain 2457T.</title>
        <authorList>
            <person name="Wei J."/>
            <person name="Goldberg M.B."/>
            <person name="Burland V."/>
            <person name="Venkatesan M.M."/>
            <person name="Deng W."/>
            <person name="Fournier G."/>
            <person name="Mayhew G.F."/>
            <person name="Plunkett G. III"/>
            <person name="Rose D.J."/>
            <person name="Darling A."/>
            <person name="Mau B."/>
            <person name="Perna N.T."/>
            <person name="Payne S.M."/>
            <person name="Runyen-Janecky L.J."/>
            <person name="Zhou S."/>
            <person name="Schwartz D.C."/>
            <person name="Blattner F.R."/>
        </authorList>
    </citation>
    <scope>NUCLEOTIDE SEQUENCE [LARGE SCALE GENOMIC DNA]</scope>
    <source>
        <strain>ATCC 700930 / 2457T / Serotype 2a</strain>
    </source>
</reference>
<gene>
    <name evidence="1" type="primary">ypeA</name>
    <name type="ordered locus">SF2487</name>
    <name type="ordered locus">S2635</name>
</gene>
<proteinExistence type="evidence at protein level"/>
<name>YPEA_SHIFL</name>
<accession>P63422</accession>
<accession>Q8FFA4</accession>
<accession>Q8XBI6</accession>
<evidence type="ECO:0000255" key="1">
    <source>
        <dbReference type="HAMAP-Rule" id="MF_01127"/>
    </source>
</evidence>
<evidence type="ECO:0007829" key="2">
    <source>
        <dbReference type="PDB" id="2PDO"/>
    </source>
</evidence>
<dbReference type="EC" id="2.3.1.-" evidence="1"/>
<dbReference type="EMBL" id="AE005674">
    <property type="protein sequence ID" value="AAN43992.2"/>
    <property type="molecule type" value="Genomic_DNA"/>
</dbReference>
<dbReference type="EMBL" id="AE014073">
    <property type="protein sequence ID" value="AAP17807.1"/>
    <property type="molecule type" value="Genomic_DNA"/>
</dbReference>
<dbReference type="RefSeq" id="NP_708285.2">
    <property type="nucleotide sequence ID" value="NC_004337.2"/>
</dbReference>
<dbReference type="RefSeq" id="WP_000406000.1">
    <property type="nucleotide sequence ID" value="NZ_WPGW01000057.1"/>
</dbReference>
<dbReference type="PDB" id="2PDO">
    <property type="method" value="X-ray"/>
    <property type="resolution" value="2.00 A"/>
    <property type="chains" value="A/B/C/D/E/F/G/H=1-141"/>
</dbReference>
<dbReference type="PDBsum" id="2PDO"/>
<dbReference type="SMR" id="P63422"/>
<dbReference type="STRING" id="198214.SF2487"/>
<dbReference type="PaxDb" id="198214-SF2487"/>
<dbReference type="GeneID" id="1025585"/>
<dbReference type="KEGG" id="sfl:SF2487"/>
<dbReference type="KEGG" id="sfx:S2635"/>
<dbReference type="PATRIC" id="fig|198214.7.peg.2972"/>
<dbReference type="HOGENOM" id="CLU_013985_34_1_6"/>
<dbReference type="EvolutionaryTrace" id="P63422"/>
<dbReference type="Proteomes" id="UP000001006">
    <property type="component" value="Chromosome"/>
</dbReference>
<dbReference type="Proteomes" id="UP000002673">
    <property type="component" value="Chromosome"/>
</dbReference>
<dbReference type="GO" id="GO:0016747">
    <property type="term" value="F:acyltransferase activity, transferring groups other than amino-acyl groups"/>
    <property type="evidence" value="ECO:0007669"/>
    <property type="project" value="UniProtKB-UniRule"/>
</dbReference>
<dbReference type="CDD" id="cd04301">
    <property type="entry name" value="NAT_SF"/>
    <property type="match status" value="1"/>
</dbReference>
<dbReference type="Gene3D" id="3.40.630.30">
    <property type="match status" value="1"/>
</dbReference>
<dbReference type="HAMAP" id="MF_01127">
    <property type="entry name" value="Acetyltransf_YpeA"/>
    <property type="match status" value="1"/>
</dbReference>
<dbReference type="InterPro" id="IPR023072">
    <property type="entry name" value="Acetyltransferase_YpeA"/>
</dbReference>
<dbReference type="InterPro" id="IPR016181">
    <property type="entry name" value="Acyl_CoA_acyltransferase"/>
</dbReference>
<dbReference type="InterPro" id="IPR050832">
    <property type="entry name" value="Bact_Acetyltransf"/>
</dbReference>
<dbReference type="InterPro" id="IPR000182">
    <property type="entry name" value="GNAT_dom"/>
</dbReference>
<dbReference type="NCBIfam" id="NF002959">
    <property type="entry name" value="PRK03624.1"/>
    <property type="match status" value="1"/>
</dbReference>
<dbReference type="PANTHER" id="PTHR43877">
    <property type="entry name" value="AMINOALKYLPHOSPHONATE N-ACETYLTRANSFERASE-RELATED-RELATED"/>
    <property type="match status" value="1"/>
</dbReference>
<dbReference type="Pfam" id="PF00583">
    <property type="entry name" value="Acetyltransf_1"/>
    <property type="match status" value="1"/>
</dbReference>
<dbReference type="SUPFAM" id="SSF55729">
    <property type="entry name" value="Acyl-CoA N-acyltransferases (Nat)"/>
    <property type="match status" value="1"/>
</dbReference>
<dbReference type="PROSITE" id="PS51186">
    <property type="entry name" value="GNAT"/>
    <property type="match status" value="1"/>
</dbReference>
<keyword id="KW-0002">3D-structure</keyword>
<keyword id="KW-0012">Acyltransferase</keyword>
<keyword id="KW-1185">Reference proteome</keyword>
<keyword id="KW-0808">Transferase</keyword>